<gene>
    <name evidence="1" type="primary">dnaJ</name>
    <name type="ordered locus">BT9727_4050</name>
</gene>
<name>DNAJ_BACHK</name>
<reference key="1">
    <citation type="journal article" date="2006" name="J. Bacteriol.">
        <title>Pathogenomic sequence analysis of Bacillus cereus and Bacillus thuringiensis isolates closely related to Bacillus anthracis.</title>
        <authorList>
            <person name="Han C.S."/>
            <person name="Xie G."/>
            <person name="Challacombe J.F."/>
            <person name="Altherr M.R."/>
            <person name="Bhotika S.S."/>
            <person name="Bruce D."/>
            <person name="Campbell C.S."/>
            <person name="Campbell M.L."/>
            <person name="Chen J."/>
            <person name="Chertkov O."/>
            <person name="Cleland C."/>
            <person name="Dimitrijevic M."/>
            <person name="Doggett N.A."/>
            <person name="Fawcett J.J."/>
            <person name="Glavina T."/>
            <person name="Goodwin L.A."/>
            <person name="Hill K.K."/>
            <person name="Hitchcock P."/>
            <person name="Jackson P.J."/>
            <person name="Keim P."/>
            <person name="Kewalramani A.R."/>
            <person name="Longmire J."/>
            <person name="Lucas S."/>
            <person name="Malfatti S."/>
            <person name="McMurry K."/>
            <person name="Meincke L.J."/>
            <person name="Misra M."/>
            <person name="Moseman B.L."/>
            <person name="Mundt M."/>
            <person name="Munk A.C."/>
            <person name="Okinaka R.T."/>
            <person name="Parson-Quintana B."/>
            <person name="Reilly L.P."/>
            <person name="Richardson P."/>
            <person name="Robinson D.L."/>
            <person name="Rubin E."/>
            <person name="Saunders E."/>
            <person name="Tapia R."/>
            <person name="Tesmer J.G."/>
            <person name="Thayer N."/>
            <person name="Thompson L.S."/>
            <person name="Tice H."/>
            <person name="Ticknor L.O."/>
            <person name="Wills P.L."/>
            <person name="Brettin T.S."/>
            <person name="Gilna P."/>
        </authorList>
    </citation>
    <scope>NUCLEOTIDE SEQUENCE [LARGE SCALE GENOMIC DNA]</scope>
    <source>
        <strain>97-27</strain>
    </source>
</reference>
<accession>Q6HDK8</accession>
<comment type="function">
    <text evidence="1">Participates actively in the response to hyperosmotic and heat shock by preventing the aggregation of stress-denatured proteins and by disaggregating proteins, also in an autonomous, DnaK-independent fashion. Unfolded proteins bind initially to DnaJ; upon interaction with the DnaJ-bound protein, DnaK hydrolyzes its bound ATP, resulting in the formation of a stable complex. GrpE releases ADP from DnaK; ATP binding to DnaK triggers the release of the substrate protein, thus completing the reaction cycle. Several rounds of ATP-dependent interactions between DnaJ, DnaK and GrpE are required for fully efficient folding. Also involved, together with DnaK and GrpE, in the DNA replication of plasmids through activation of initiation proteins.</text>
</comment>
<comment type="cofactor">
    <cofactor evidence="1">
        <name>Zn(2+)</name>
        <dbReference type="ChEBI" id="CHEBI:29105"/>
    </cofactor>
    <text evidence="1">Binds 2 Zn(2+) ions per monomer.</text>
</comment>
<comment type="subunit">
    <text evidence="1">Homodimer.</text>
</comment>
<comment type="subcellular location">
    <subcellularLocation>
        <location evidence="1">Cytoplasm</location>
    </subcellularLocation>
</comment>
<comment type="domain">
    <text evidence="1">The J domain is necessary and sufficient to stimulate DnaK ATPase activity. Zinc center 1 plays an important role in the autonomous, DnaK-independent chaperone activity of DnaJ. Zinc center 2 is essential for interaction with DnaK and for DnaJ activity.</text>
</comment>
<comment type="similarity">
    <text evidence="1">Belongs to the DnaJ family.</text>
</comment>
<sequence>MSKRDYYEVLGLSKGASKDEIKKAYRRLAKKYHPDVSKEENAIEKFKEVQEAYEVLSDDQKRAQYDQFGHAGANQGFGGFGGGGDFGGGFGFEDIFSSFFGGGGGRRRDPNAPRQGADLQYQVTLEFEEAIFGKELNVEIPVEDPCDTCKGSGAKPGTSKETCKHCSGSGQVSVEQNTPFGRIVNRQACSHCSGTGQMIKEKCTTCHGSGKVRKRKKINVKIPAGIDNGQQIRVSGKGEAGVNGGPAGDLYVVVHVRSHEFFEREGDHIICEMPLTFAQMALGAEVEVPTVHGKVKLKIPAGTQTGTEFRLKGKGAPNVRGYGQGDQYVVVRVVVPTKLTSHQKDLLREFAGQEEQDDSLFGKLKRAFKGE</sequence>
<organism>
    <name type="scientific">Bacillus thuringiensis subsp. konkukian (strain 97-27)</name>
    <dbReference type="NCBI Taxonomy" id="281309"/>
    <lineage>
        <taxon>Bacteria</taxon>
        <taxon>Bacillati</taxon>
        <taxon>Bacillota</taxon>
        <taxon>Bacilli</taxon>
        <taxon>Bacillales</taxon>
        <taxon>Bacillaceae</taxon>
        <taxon>Bacillus</taxon>
        <taxon>Bacillus cereus group</taxon>
    </lineage>
</organism>
<proteinExistence type="inferred from homology"/>
<protein>
    <recommendedName>
        <fullName evidence="1">Chaperone protein DnaJ</fullName>
    </recommendedName>
</protein>
<evidence type="ECO:0000255" key="1">
    <source>
        <dbReference type="HAMAP-Rule" id="MF_01152"/>
    </source>
</evidence>
<dbReference type="EMBL" id="AE017355">
    <property type="protein sequence ID" value="AAT63523.1"/>
    <property type="molecule type" value="Genomic_DNA"/>
</dbReference>
<dbReference type="RefSeq" id="WP_000043938.1">
    <property type="nucleotide sequence ID" value="NC_005957.1"/>
</dbReference>
<dbReference type="RefSeq" id="YP_038368.1">
    <property type="nucleotide sequence ID" value="NC_005957.1"/>
</dbReference>
<dbReference type="SMR" id="Q6HDK8"/>
<dbReference type="GeneID" id="45024190"/>
<dbReference type="KEGG" id="btk:BT9727_4050"/>
<dbReference type="PATRIC" id="fig|281309.8.peg.4322"/>
<dbReference type="HOGENOM" id="CLU_017633_0_7_9"/>
<dbReference type="Proteomes" id="UP000001301">
    <property type="component" value="Chromosome"/>
</dbReference>
<dbReference type="GO" id="GO:0005737">
    <property type="term" value="C:cytoplasm"/>
    <property type="evidence" value="ECO:0007669"/>
    <property type="project" value="UniProtKB-SubCell"/>
</dbReference>
<dbReference type="GO" id="GO:0005524">
    <property type="term" value="F:ATP binding"/>
    <property type="evidence" value="ECO:0007669"/>
    <property type="project" value="InterPro"/>
</dbReference>
<dbReference type="GO" id="GO:0031072">
    <property type="term" value="F:heat shock protein binding"/>
    <property type="evidence" value="ECO:0007669"/>
    <property type="project" value="InterPro"/>
</dbReference>
<dbReference type="GO" id="GO:0051082">
    <property type="term" value="F:unfolded protein binding"/>
    <property type="evidence" value="ECO:0007669"/>
    <property type="project" value="UniProtKB-UniRule"/>
</dbReference>
<dbReference type="GO" id="GO:0008270">
    <property type="term" value="F:zinc ion binding"/>
    <property type="evidence" value="ECO:0007669"/>
    <property type="project" value="UniProtKB-UniRule"/>
</dbReference>
<dbReference type="GO" id="GO:0051085">
    <property type="term" value="P:chaperone cofactor-dependent protein refolding"/>
    <property type="evidence" value="ECO:0007669"/>
    <property type="project" value="TreeGrafter"/>
</dbReference>
<dbReference type="GO" id="GO:0006260">
    <property type="term" value="P:DNA replication"/>
    <property type="evidence" value="ECO:0007669"/>
    <property type="project" value="UniProtKB-KW"/>
</dbReference>
<dbReference type="GO" id="GO:0042026">
    <property type="term" value="P:protein refolding"/>
    <property type="evidence" value="ECO:0007669"/>
    <property type="project" value="TreeGrafter"/>
</dbReference>
<dbReference type="GO" id="GO:0009408">
    <property type="term" value="P:response to heat"/>
    <property type="evidence" value="ECO:0007669"/>
    <property type="project" value="InterPro"/>
</dbReference>
<dbReference type="CDD" id="cd06257">
    <property type="entry name" value="DnaJ"/>
    <property type="match status" value="1"/>
</dbReference>
<dbReference type="CDD" id="cd10747">
    <property type="entry name" value="DnaJ_C"/>
    <property type="match status" value="1"/>
</dbReference>
<dbReference type="CDD" id="cd10719">
    <property type="entry name" value="DnaJ_zf"/>
    <property type="match status" value="1"/>
</dbReference>
<dbReference type="FunFam" id="1.10.287.110:FF:000031">
    <property type="entry name" value="Molecular chaperone DnaJ"/>
    <property type="match status" value="1"/>
</dbReference>
<dbReference type="FunFam" id="2.60.260.20:FF:000004">
    <property type="entry name" value="Molecular chaperone DnaJ"/>
    <property type="match status" value="1"/>
</dbReference>
<dbReference type="FunFam" id="2.60.260.20:FF:000009">
    <property type="entry name" value="Putative Mitochondrial DnaJ chaperone"/>
    <property type="match status" value="1"/>
</dbReference>
<dbReference type="Gene3D" id="6.20.20.10">
    <property type="match status" value="2"/>
</dbReference>
<dbReference type="Gene3D" id="1.10.287.110">
    <property type="entry name" value="DnaJ domain"/>
    <property type="match status" value="1"/>
</dbReference>
<dbReference type="Gene3D" id="2.60.260.20">
    <property type="entry name" value="Urease metallochaperone UreE, N-terminal domain"/>
    <property type="match status" value="2"/>
</dbReference>
<dbReference type="HAMAP" id="MF_01152">
    <property type="entry name" value="DnaJ"/>
    <property type="match status" value="1"/>
</dbReference>
<dbReference type="InterPro" id="IPR012724">
    <property type="entry name" value="DnaJ"/>
</dbReference>
<dbReference type="InterPro" id="IPR002939">
    <property type="entry name" value="DnaJ_C"/>
</dbReference>
<dbReference type="InterPro" id="IPR001623">
    <property type="entry name" value="DnaJ_domain"/>
</dbReference>
<dbReference type="InterPro" id="IPR018253">
    <property type="entry name" value="DnaJ_domain_CS"/>
</dbReference>
<dbReference type="InterPro" id="IPR008971">
    <property type="entry name" value="HSP40/DnaJ_pept-bd"/>
</dbReference>
<dbReference type="InterPro" id="IPR001305">
    <property type="entry name" value="HSP_DnaJ_Cys-rich_dom"/>
</dbReference>
<dbReference type="InterPro" id="IPR036410">
    <property type="entry name" value="HSP_DnaJ_Cys-rich_dom_sf"/>
</dbReference>
<dbReference type="InterPro" id="IPR036869">
    <property type="entry name" value="J_dom_sf"/>
</dbReference>
<dbReference type="NCBIfam" id="TIGR02349">
    <property type="entry name" value="DnaJ_bact"/>
    <property type="match status" value="1"/>
</dbReference>
<dbReference type="NCBIfam" id="NF008035">
    <property type="entry name" value="PRK10767.1"/>
    <property type="match status" value="1"/>
</dbReference>
<dbReference type="NCBIfam" id="NF010873">
    <property type="entry name" value="PRK14280.1"/>
    <property type="match status" value="1"/>
</dbReference>
<dbReference type="PANTHER" id="PTHR43096:SF48">
    <property type="entry name" value="CHAPERONE PROTEIN DNAJ"/>
    <property type="match status" value="1"/>
</dbReference>
<dbReference type="PANTHER" id="PTHR43096">
    <property type="entry name" value="DNAJ HOMOLOG 1, MITOCHONDRIAL-RELATED"/>
    <property type="match status" value="1"/>
</dbReference>
<dbReference type="Pfam" id="PF00226">
    <property type="entry name" value="DnaJ"/>
    <property type="match status" value="1"/>
</dbReference>
<dbReference type="Pfam" id="PF01556">
    <property type="entry name" value="DnaJ_C"/>
    <property type="match status" value="1"/>
</dbReference>
<dbReference type="Pfam" id="PF00684">
    <property type="entry name" value="DnaJ_CXXCXGXG"/>
    <property type="match status" value="1"/>
</dbReference>
<dbReference type="PRINTS" id="PR00625">
    <property type="entry name" value="JDOMAIN"/>
</dbReference>
<dbReference type="SMART" id="SM00271">
    <property type="entry name" value="DnaJ"/>
    <property type="match status" value="1"/>
</dbReference>
<dbReference type="SUPFAM" id="SSF46565">
    <property type="entry name" value="Chaperone J-domain"/>
    <property type="match status" value="1"/>
</dbReference>
<dbReference type="SUPFAM" id="SSF57938">
    <property type="entry name" value="DnaJ/Hsp40 cysteine-rich domain"/>
    <property type="match status" value="1"/>
</dbReference>
<dbReference type="SUPFAM" id="SSF49493">
    <property type="entry name" value="HSP40/DnaJ peptide-binding domain"/>
    <property type="match status" value="2"/>
</dbReference>
<dbReference type="PROSITE" id="PS00636">
    <property type="entry name" value="DNAJ_1"/>
    <property type="match status" value="1"/>
</dbReference>
<dbReference type="PROSITE" id="PS50076">
    <property type="entry name" value="DNAJ_2"/>
    <property type="match status" value="1"/>
</dbReference>
<dbReference type="PROSITE" id="PS51188">
    <property type="entry name" value="ZF_CR"/>
    <property type="match status" value="1"/>
</dbReference>
<feature type="chain" id="PRO_0000070722" description="Chaperone protein DnaJ">
    <location>
        <begin position="1"/>
        <end position="371"/>
    </location>
</feature>
<feature type="domain" description="J" evidence="1">
    <location>
        <begin position="5"/>
        <end position="69"/>
    </location>
</feature>
<feature type="repeat" description="CXXCXGXG motif">
    <location>
        <begin position="146"/>
        <end position="153"/>
    </location>
</feature>
<feature type="repeat" description="CXXCXGXG motif">
    <location>
        <begin position="163"/>
        <end position="170"/>
    </location>
</feature>
<feature type="repeat" description="CXXCXGXG motif">
    <location>
        <begin position="189"/>
        <end position="196"/>
    </location>
</feature>
<feature type="repeat" description="CXXCXGXG motif">
    <location>
        <begin position="203"/>
        <end position="210"/>
    </location>
</feature>
<feature type="zinc finger region" description="CR-type" evidence="1">
    <location>
        <begin position="133"/>
        <end position="215"/>
    </location>
</feature>
<feature type="binding site" evidence="1">
    <location>
        <position position="146"/>
    </location>
    <ligand>
        <name>Zn(2+)</name>
        <dbReference type="ChEBI" id="CHEBI:29105"/>
        <label>1</label>
    </ligand>
</feature>
<feature type="binding site" evidence="1">
    <location>
        <position position="149"/>
    </location>
    <ligand>
        <name>Zn(2+)</name>
        <dbReference type="ChEBI" id="CHEBI:29105"/>
        <label>1</label>
    </ligand>
</feature>
<feature type="binding site" evidence="1">
    <location>
        <position position="163"/>
    </location>
    <ligand>
        <name>Zn(2+)</name>
        <dbReference type="ChEBI" id="CHEBI:29105"/>
        <label>2</label>
    </ligand>
</feature>
<feature type="binding site" evidence="1">
    <location>
        <position position="166"/>
    </location>
    <ligand>
        <name>Zn(2+)</name>
        <dbReference type="ChEBI" id="CHEBI:29105"/>
        <label>2</label>
    </ligand>
</feature>
<feature type="binding site" evidence="1">
    <location>
        <position position="189"/>
    </location>
    <ligand>
        <name>Zn(2+)</name>
        <dbReference type="ChEBI" id="CHEBI:29105"/>
        <label>2</label>
    </ligand>
</feature>
<feature type="binding site" evidence="1">
    <location>
        <position position="192"/>
    </location>
    <ligand>
        <name>Zn(2+)</name>
        <dbReference type="ChEBI" id="CHEBI:29105"/>
        <label>2</label>
    </ligand>
</feature>
<feature type="binding site" evidence="1">
    <location>
        <position position="203"/>
    </location>
    <ligand>
        <name>Zn(2+)</name>
        <dbReference type="ChEBI" id="CHEBI:29105"/>
        <label>1</label>
    </ligand>
</feature>
<feature type="binding site" evidence="1">
    <location>
        <position position="206"/>
    </location>
    <ligand>
        <name>Zn(2+)</name>
        <dbReference type="ChEBI" id="CHEBI:29105"/>
        <label>1</label>
    </ligand>
</feature>
<keyword id="KW-0143">Chaperone</keyword>
<keyword id="KW-0963">Cytoplasm</keyword>
<keyword id="KW-0235">DNA replication</keyword>
<keyword id="KW-0479">Metal-binding</keyword>
<keyword id="KW-0677">Repeat</keyword>
<keyword id="KW-0346">Stress response</keyword>
<keyword id="KW-0862">Zinc</keyword>
<keyword id="KW-0863">Zinc-finger</keyword>